<keyword id="KW-0150">Chloroplast</keyword>
<keyword id="KW-0934">Plastid</keyword>
<keyword id="KW-0687">Ribonucleoprotein</keyword>
<keyword id="KW-0689">Ribosomal protein</keyword>
<keyword id="KW-0694">RNA-binding</keyword>
<keyword id="KW-0699">rRNA-binding</keyword>
<protein>
    <recommendedName>
        <fullName evidence="3">Small ribosomal subunit protein uS12c</fullName>
    </recommendedName>
    <alternativeName>
        <fullName>30S ribosomal protein S12, chloroplastic</fullName>
    </alternativeName>
</protein>
<feature type="chain" id="PRO_0000276640" description="Small ribosomal subunit protein uS12c">
    <location>
        <begin position="1"/>
        <end position="124"/>
    </location>
</feature>
<feature type="region of interest" description="Disordered" evidence="2">
    <location>
        <begin position="104"/>
        <end position="124"/>
    </location>
</feature>
<feature type="compositionally biased region" description="Basic residues" evidence="2">
    <location>
        <begin position="113"/>
        <end position="124"/>
    </location>
</feature>
<proteinExistence type="inferred from homology"/>
<organism>
    <name type="scientific">Thalassiosira pseudonana</name>
    <name type="common">Marine diatom</name>
    <name type="synonym">Cyclotella nana</name>
    <dbReference type="NCBI Taxonomy" id="35128"/>
    <lineage>
        <taxon>Eukaryota</taxon>
        <taxon>Sar</taxon>
        <taxon>Stramenopiles</taxon>
        <taxon>Ochrophyta</taxon>
        <taxon>Bacillariophyta</taxon>
        <taxon>Coscinodiscophyceae</taxon>
        <taxon>Thalassiosirophycidae</taxon>
        <taxon>Thalassiosirales</taxon>
        <taxon>Thalassiosiraceae</taxon>
        <taxon>Thalassiosira</taxon>
    </lineage>
</organism>
<comment type="function">
    <text evidence="1">With S4 and S5 plays an important role in translational accuracy. Located at the interface of the 30S and 50S subunits (By similarity).</text>
</comment>
<comment type="subunit">
    <text evidence="1">Part of the 30S ribosomal subunit.</text>
</comment>
<comment type="subcellular location">
    <subcellularLocation>
        <location>Plastid</location>
        <location>Chloroplast</location>
    </subcellularLocation>
</comment>
<comment type="similarity">
    <text evidence="3">Belongs to the universal ribosomal protein uS12 family.</text>
</comment>
<reference key="1">
    <citation type="journal article" date="2007" name="Mol. Genet. Genomics">
        <title>Chloroplast genomes of the diatoms Phaeodactylum tricornutum and Thalassiosira pseudonana: comparison with other plastid genomes of the red lineage.</title>
        <authorList>
            <person name="Oudot-Le Secq M.-P."/>
            <person name="Grimwood J."/>
            <person name="Shapiro H."/>
            <person name="Armbrust E.V."/>
            <person name="Bowler C."/>
            <person name="Green B.R."/>
        </authorList>
    </citation>
    <scope>NUCLEOTIDE SEQUENCE [LARGE SCALE GENOMIC DNA]</scope>
    <source>
        <strain>CCMP1335 / NEPCC58 / CCAP 1085/12</strain>
    </source>
</reference>
<dbReference type="EMBL" id="EF067921">
    <property type="protein sequence ID" value="ABK20833.1"/>
    <property type="molecule type" value="Genomic_DNA"/>
</dbReference>
<dbReference type="RefSeq" id="YP_874610.1">
    <property type="nucleotide sequence ID" value="NC_008589.1"/>
</dbReference>
<dbReference type="SMR" id="A0T0Z8"/>
<dbReference type="FunCoup" id="A0T0Z8">
    <property type="interactions" value="98"/>
</dbReference>
<dbReference type="STRING" id="35128.A0T0Z8"/>
<dbReference type="GeneID" id="4524810"/>
<dbReference type="InParanoid" id="A0T0Z8"/>
<dbReference type="GO" id="GO:0009507">
    <property type="term" value="C:chloroplast"/>
    <property type="evidence" value="ECO:0007669"/>
    <property type="project" value="UniProtKB-SubCell"/>
</dbReference>
<dbReference type="GO" id="GO:0005840">
    <property type="term" value="C:ribosome"/>
    <property type="evidence" value="ECO:0000318"/>
    <property type="project" value="GO_Central"/>
</dbReference>
<dbReference type="GO" id="GO:0015935">
    <property type="term" value="C:small ribosomal subunit"/>
    <property type="evidence" value="ECO:0007669"/>
    <property type="project" value="InterPro"/>
</dbReference>
<dbReference type="GO" id="GO:0019843">
    <property type="term" value="F:rRNA binding"/>
    <property type="evidence" value="ECO:0007669"/>
    <property type="project" value="UniProtKB-UniRule"/>
</dbReference>
<dbReference type="GO" id="GO:0003735">
    <property type="term" value="F:structural constituent of ribosome"/>
    <property type="evidence" value="ECO:0000318"/>
    <property type="project" value="GO_Central"/>
</dbReference>
<dbReference type="GO" id="GO:0006412">
    <property type="term" value="P:translation"/>
    <property type="evidence" value="ECO:0000318"/>
    <property type="project" value="GO_Central"/>
</dbReference>
<dbReference type="CDD" id="cd03368">
    <property type="entry name" value="Ribosomal_S12"/>
    <property type="match status" value="1"/>
</dbReference>
<dbReference type="FunFam" id="2.40.50.140:FF:000001">
    <property type="entry name" value="30S ribosomal protein S12"/>
    <property type="match status" value="1"/>
</dbReference>
<dbReference type="Gene3D" id="2.40.50.140">
    <property type="entry name" value="Nucleic acid-binding proteins"/>
    <property type="match status" value="1"/>
</dbReference>
<dbReference type="HAMAP" id="MF_00403_B">
    <property type="entry name" value="Ribosomal_uS12_B"/>
    <property type="match status" value="1"/>
</dbReference>
<dbReference type="InterPro" id="IPR012340">
    <property type="entry name" value="NA-bd_OB-fold"/>
</dbReference>
<dbReference type="InterPro" id="IPR006032">
    <property type="entry name" value="Ribosomal_uS12"/>
</dbReference>
<dbReference type="InterPro" id="IPR005679">
    <property type="entry name" value="Ribosomal_uS12_bac"/>
</dbReference>
<dbReference type="NCBIfam" id="TIGR00981">
    <property type="entry name" value="rpsL_bact"/>
    <property type="match status" value="1"/>
</dbReference>
<dbReference type="PANTHER" id="PTHR11652">
    <property type="entry name" value="30S RIBOSOMAL PROTEIN S12 FAMILY MEMBER"/>
    <property type="match status" value="1"/>
</dbReference>
<dbReference type="Pfam" id="PF00164">
    <property type="entry name" value="Ribosom_S12_S23"/>
    <property type="match status" value="1"/>
</dbReference>
<dbReference type="PIRSF" id="PIRSF002133">
    <property type="entry name" value="Ribosomal_S12/S23"/>
    <property type="match status" value="1"/>
</dbReference>
<dbReference type="PRINTS" id="PR01034">
    <property type="entry name" value="RIBOSOMALS12"/>
</dbReference>
<dbReference type="SUPFAM" id="SSF50249">
    <property type="entry name" value="Nucleic acid-binding proteins"/>
    <property type="match status" value="1"/>
</dbReference>
<dbReference type="PROSITE" id="PS00055">
    <property type="entry name" value="RIBOSOMAL_S12"/>
    <property type="match status" value="1"/>
</dbReference>
<evidence type="ECO:0000250" key="1"/>
<evidence type="ECO:0000256" key="2">
    <source>
        <dbReference type="SAM" id="MobiDB-lite"/>
    </source>
</evidence>
<evidence type="ECO:0000305" key="3"/>
<name>RR12_THAPS</name>
<accession>A0T0Z8</accession>
<gene>
    <name type="primary">rps12</name>
</gene>
<geneLocation type="chloroplast"/>
<sequence length="124" mass="13913">MPTIQQLVRLRRIQITKKTKSPALVNCPQRRGVCTRVYTTTPKKPNSAIRKVARVRLTSGFEVTAYIPGEGHNLQEHSVVLIRGGRVKDLPGVRYHIVRGALDSGGVKDRTQRRSKYGVKKPKS</sequence>